<accession>A5VEV5</accession>
<name>ATP6_RHIWR</name>
<feature type="chain" id="PRO_0000362473" description="ATP synthase subunit a">
    <location>
        <begin position="1"/>
        <end position="261"/>
    </location>
</feature>
<feature type="transmembrane region" description="Helical" evidence="1">
    <location>
        <begin position="31"/>
        <end position="51"/>
    </location>
</feature>
<feature type="transmembrane region" description="Helical" evidence="1">
    <location>
        <begin position="64"/>
        <end position="84"/>
    </location>
</feature>
<feature type="transmembrane region" description="Helical" evidence="1">
    <location>
        <begin position="97"/>
        <end position="117"/>
    </location>
</feature>
<feature type="transmembrane region" description="Helical" evidence="1">
    <location>
        <begin position="126"/>
        <end position="146"/>
    </location>
</feature>
<feature type="transmembrane region" description="Helical" evidence="1">
    <location>
        <begin position="166"/>
        <end position="188"/>
    </location>
</feature>
<feature type="transmembrane region" description="Helical" evidence="1">
    <location>
        <begin position="201"/>
        <end position="223"/>
    </location>
</feature>
<feature type="transmembrane region" description="Helical" evidence="1">
    <location>
        <begin position="235"/>
        <end position="255"/>
    </location>
</feature>
<comment type="function">
    <text evidence="1">Key component of the proton channel; it plays a direct role in the translocation of protons across the membrane.</text>
</comment>
<comment type="subunit">
    <text evidence="1">F-type ATPases have 2 components, CF(1) - the catalytic core - and CF(0) - the membrane proton channel. CF(1) has five subunits: alpha(3), beta(3), gamma(1), delta(1), epsilon(1). CF(0) has three main subunits: a(1), b(2) and c(9-12). The alpha and beta chains form an alternating ring which encloses part of the gamma chain. CF(1) is attached to CF(0) by a central stalk formed by the gamma and epsilon chains, while a peripheral stalk is formed by the delta and b chains.</text>
</comment>
<comment type="subcellular location">
    <subcellularLocation>
        <location evidence="1">Cell inner membrane</location>
        <topology evidence="1">Multi-pass membrane protein</topology>
    </subcellularLocation>
</comment>
<comment type="similarity">
    <text evidence="1">Belongs to the ATPase A chain family.</text>
</comment>
<protein>
    <recommendedName>
        <fullName evidence="1">ATP synthase subunit a</fullName>
    </recommendedName>
    <alternativeName>
        <fullName evidence="1">ATP synthase F0 sector subunit a</fullName>
    </alternativeName>
    <alternativeName>
        <fullName evidence="1">F-ATPase subunit 6</fullName>
    </alternativeName>
</protein>
<keyword id="KW-0066">ATP synthesis</keyword>
<keyword id="KW-0997">Cell inner membrane</keyword>
<keyword id="KW-1003">Cell membrane</keyword>
<keyword id="KW-0138">CF(0)</keyword>
<keyword id="KW-0375">Hydrogen ion transport</keyword>
<keyword id="KW-0406">Ion transport</keyword>
<keyword id="KW-0472">Membrane</keyword>
<keyword id="KW-1185">Reference proteome</keyword>
<keyword id="KW-0812">Transmembrane</keyword>
<keyword id="KW-1133">Transmembrane helix</keyword>
<keyword id="KW-0813">Transport</keyword>
<reference key="1">
    <citation type="journal article" date="2010" name="J. Bacteriol.">
        <title>Genome sequence of the dioxin-mineralizing bacterium Sphingomonas wittichii RW1.</title>
        <authorList>
            <person name="Miller T.R."/>
            <person name="Delcher A.L."/>
            <person name="Salzberg S.L."/>
            <person name="Saunders E."/>
            <person name="Detter J.C."/>
            <person name="Halden R.U."/>
        </authorList>
    </citation>
    <scope>NUCLEOTIDE SEQUENCE [LARGE SCALE GENOMIC DNA]</scope>
    <source>
        <strain>DSM 6014 / CCUG 31198 / JCM 15750 / NBRC 105917 / EY 4224 / RW1</strain>
    </source>
</reference>
<dbReference type="EMBL" id="CP000699">
    <property type="protein sequence ID" value="ABQ70821.1"/>
    <property type="molecule type" value="Genomic_DNA"/>
</dbReference>
<dbReference type="SMR" id="A5VEV5"/>
<dbReference type="STRING" id="392499.Swit_4483"/>
<dbReference type="PaxDb" id="392499-Swit_4483"/>
<dbReference type="KEGG" id="swi:Swit_4483"/>
<dbReference type="eggNOG" id="COG0356">
    <property type="taxonomic scope" value="Bacteria"/>
</dbReference>
<dbReference type="HOGENOM" id="CLU_041018_0_2_5"/>
<dbReference type="OrthoDB" id="9809130at2"/>
<dbReference type="Proteomes" id="UP000001989">
    <property type="component" value="Chromosome"/>
</dbReference>
<dbReference type="GO" id="GO:0005886">
    <property type="term" value="C:plasma membrane"/>
    <property type="evidence" value="ECO:0007669"/>
    <property type="project" value="UniProtKB-SubCell"/>
</dbReference>
<dbReference type="GO" id="GO:0045259">
    <property type="term" value="C:proton-transporting ATP synthase complex"/>
    <property type="evidence" value="ECO:0007669"/>
    <property type="project" value="UniProtKB-KW"/>
</dbReference>
<dbReference type="GO" id="GO:0046933">
    <property type="term" value="F:proton-transporting ATP synthase activity, rotational mechanism"/>
    <property type="evidence" value="ECO:0007669"/>
    <property type="project" value="UniProtKB-UniRule"/>
</dbReference>
<dbReference type="CDD" id="cd00310">
    <property type="entry name" value="ATP-synt_Fo_a_6"/>
    <property type="match status" value="1"/>
</dbReference>
<dbReference type="Gene3D" id="1.20.120.220">
    <property type="entry name" value="ATP synthase, F0 complex, subunit A"/>
    <property type="match status" value="1"/>
</dbReference>
<dbReference type="HAMAP" id="MF_01393">
    <property type="entry name" value="ATP_synth_a_bact"/>
    <property type="match status" value="1"/>
</dbReference>
<dbReference type="InterPro" id="IPR000568">
    <property type="entry name" value="ATP_synth_F0_asu"/>
</dbReference>
<dbReference type="InterPro" id="IPR045083">
    <property type="entry name" value="ATP_synth_F0_asu_bact/mt"/>
</dbReference>
<dbReference type="InterPro" id="IPR035908">
    <property type="entry name" value="F0_ATP_A_sf"/>
</dbReference>
<dbReference type="NCBIfam" id="TIGR01131">
    <property type="entry name" value="ATP_synt_6_or_A"/>
    <property type="match status" value="1"/>
</dbReference>
<dbReference type="NCBIfam" id="NF004482">
    <property type="entry name" value="PRK05815.2-4"/>
    <property type="match status" value="1"/>
</dbReference>
<dbReference type="PANTHER" id="PTHR11410">
    <property type="entry name" value="ATP SYNTHASE SUBUNIT A"/>
    <property type="match status" value="1"/>
</dbReference>
<dbReference type="PANTHER" id="PTHR11410:SF0">
    <property type="entry name" value="ATP SYNTHASE SUBUNIT A"/>
    <property type="match status" value="1"/>
</dbReference>
<dbReference type="Pfam" id="PF00119">
    <property type="entry name" value="ATP-synt_A"/>
    <property type="match status" value="1"/>
</dbReference>
<dbReference type="PRINTS" id="PR00123">
    <property type="entry name" value="ATPASEA"/>
</dbReference>
<dbReference type="SUPFAM" id="SSF81336">
    <property type="entry name" value="F1F0 ATP synthase subunit A"/>
    <property type="match status" value="1"/>
</dbReference>
<evidence type="ECO:0000255" key="1">
    <source>
        <dbReference type="HAMAP-Rule" id="MF_01393"/>
    </source>
</evidence>
<organism>
    <name type="scientific">Rhizorhabdus wittichii (strain DSM 6014 / CCUG 31198 / JCM 15750 / NBRC 105917 / EY 4224 / RW1)</name>
    <name type="common">Sphingomonas wittichii</name>
    <dbReference type="NCBI Taxonomy" id="392499"/>
    <lineage>
        <taxon>Bacteria</taxon>
        <taxon>Pseudomonadati</taxon>
        <taxon>Pseudomonadota</taxon>
        <taxon>Alphaproteobacteria</taxon>
        <taxon>Sphingomonadales</taxon>
        <taxon>Sphingomonadaceae</taxon>
        <taxon>Rhizorhabdus</taxon>
    </lineage>
</organism>
<proteinExistence type="inferred from homology"/>
<sequence length="261" mass="28425">MAAESGKIDPMHQFMIEPLFGQGWSIAGHNIAFTNSAMWMVVTLAALLIFMIGGMKRDLVPGRWQAAVESFTGFVAGMMATNIGPEGKKFTPYVFSLFMFILIANIMGMMPTGVVGVHPFTVTSHLTVTGVLAVISFSIVLVVGFWRHGFHFFSLFVPHGTPGYMIPMIFVIELFSFLIRPFSLGLRLFVAMTAGHILMKVLAGFVINGINAGALTVAIVSIPSFILMIGITLLELLVCAIQAYVFALLTSLYLNDAINLH</sequence>
<gene>
    <name evidence="1" type="primary">atpB</name>
    <name type="ordered locus">Swit_4483</name>
</gene>